<name>SLA1_YARLI</name>
<evidence type="ECO:0000250" key="1"/>
<evidence type="ECO:0000255" key="2">
    <source>
        <dbReference type="PROSITE-ProRule" id="PRU00192"/>
    </source>
</evidence>
<evidence type="ECO:0000256" key="3">
    <source>
        <dbReference type="SAM" id="MobiDB-lite"/>
    </source>
</evidence>
<evidence type="ECO:0000305" key="4"/>
<reference key="1">
    <citation type="journal article" date="2004" name="Nature">
        <title>Genome evolution in yeasts.</title>
        <authorList>
            <person name="Dujon B."/>
            <person name="Sherman D."/>
            <person name="Fischer G."/>
            <person name="Durrens P."/>
            <person name="Casaregola S."/>
            <person name="Lafontaine I."/>
            <person name="de Montigny J."/>
            <person name="Marck C."/>
            <person name="Neuveglise C."/>
            <person name="Talla E."/>
            <person name="Goffard N."/>
            <person name="Frangeul L."/>
            <person name="Aigle M."/>
            <person name="Anthouard V."/>
            <person name="Babour A."/>
            <person name="Barbe V."/>
            <person name="Barnay S."/>
            <person name="Blanchin S."/>
            <person name="Beckerich J.-M."/>
            <person name="Beyne E."/>
            <person name="Bleykasten C."/>
            <person name="Boisrame A."/>
            <person name="Boyer J."/>
            <person name="Cattolico L."/>
            <person name="Confanioleri F."/>
            <person name="de Daruvar A."/>
            <person name="Despons L."/>
            <person name="Fabre E."/>
            <person name="Fairhead C."/>
            <person name="Ferry-Dumazet H."/>
            <person name="Groppi A."/>
            <person name="Hantraye F."/>
            <person name="Hennequin C."/>
            <person name="Jauniaux N."/>
            <person name="Joyet P."/>
            <person name="Kachouri R."/>
            <person name="Kerrest A."/>
            <person name="Koszul R."/>
            <person name="Lemaire M."/>
            <person name="Lesur I."/>
            <person name="Ma L."/>
            <person name="Muller H."/>
            <person name="Nicaud J.-M."/>
            <person name="Nikolski M."/>
            <person name="Oztas S."/>
            <person name="Ozier-Kalogeropoulos O."/>
            <person name="Pellenz S."/>
            <person name="Potier S."/>
            <person name="Richard G.-F."/>
            <person name="Straub M.-L."/>
            <person name="Suleau A."/>
            <person name="Swennen D."/>
            <person name="Tekaia F."/>
            <person name="Wesolowski-Louvel M."/>
            <person name="Westhof E."/>
            <person name="Wirth B."/>
            <person name="Zeniou-Meyer M."/>
            <person name="Zivanovic Y."/>
            <person name="Bolotin-Fukuhara M."/>
            <person name="Thierry A."/>
            <person name="Bouchier C."/>
            <person name="Caudron B."/>
            <person name="Scarpelli C."/>
            <person name="Gaillardin C."/>
            <person name="Weissenbach J."/>
            <person name="Wincker P."/>
            <person name="Souciet J.-L."/>
        </authorList>
    </citation>
    <scope>NUCLEOTIDE SEQUENCE [LARGE SCALE GENOMIC DNA]</scope>
    <source>
        <strain>CLIB 122 / E 150</strain>
    </source>
</reference>
<keyword id="KW-0009">Actin-binding</keyword>
<keyword id="KW-1003">Cell membrane</keyword>
<keyword id="KW-0963">Cytoplasm</keyword>
<keyword id="KW-0206">Cytoskeleton</keyword>
<keyword id="KW-0254">Endocytosis</keyword>
<keyword id="KW-0967">Endosome</keyword>
<keyword id="KW-0472">Membrane</keyword>
<keyword id="KW-1185">Reference proteome</keyword>
<keyword id="KW-0677">Repeat</keyword>
<keyword id="KW-0728">SH3 domain</keyword>
<organism>
    <name type="scientific">Yarrowia lipolytica (strain CLIB 122 / E 150)</name>
    <name type="common">Yeast</name>
    <name type="synonym">Candida lipolytica</name>
    <dbReference type="NCBI Taxonomy" id="284591"/>
    <lineage>
        <taxon>Eukaryota</taxon>
        <taxon>Fungi</taxon>
        <taxon>Dikarya</taxon>
        <taxon>Ascomycota</taxon>
        <taxon>Saccharomycotina</taxon>
        <taxon>Dipodascomycetes</taxon>
        <taxon>Dipodascales</taxon>
        <taxon>Dipodascales incertae sedis</taxon>
        <taxon>Yarrowia</taxon>
    </lineage>
</organism>
<gene>
    <name type="primary">SLA1</name>
    <name type="ordered locus">YALI0A07018g</name>
</gene>
<feature type="chain" id="PRO_0000349492" description="Actin cytoskeleton-regulatory complex protein SLA1">
    <location>
        <begin position="1"/>
        <end position="1136"/>
    </location>
</feature>
<feature type="domain" description="SH3 1" evidence="2">
    <location>
        <begin position="4"/>
        <end position="66"/>
    </location>
</feature>
<feature type="domain" description="SH3 2" evidence="2">
    <location>
        <begin position="68"/>
        <end position="128"/>
    </location>
</feature>
<feature type="domain" description="SH3 3" evidence="2">
    <location>
        <begin position="356"/>
        <end position="417"/>
    </location>
</feature>
<feature type="region of interest" description="Disordered" evidence="3">
    <location>
        <begin position="143"/>
        <end position="251"/>
    </location>
</feature>
<feature type="region of interest" description="Disordered" evidence="3">
    <location>
        <begin position="423"/>
        <end position="475"/>
    </location>
</feature>
<feature type="region of interest" description="Disordered" evidence="3">
    <location>
        <begin position="532"/>
        <end position="573"/>
    </location>
</feature>
<feature type="region of interest" description="Disordered" evidence="3">
    <location>
        <begin position="640"/>
        <end position="739"/>
    </location>
</feature>
<feature type="region of interest" description="Disordered" evidence="3">
    <location>
        <begin position="775"/>
        <end position="810"/>
    </location>
</feature>
<feature type="region of interest" description="Disordered" evidence="3">
    <location>
        <begin position="928"/>
        <end position="1011"/>
    </location>
</feature>
<feature type="region of interest" description="Disordered" evidence="3">
    <location>
        <begin position="1024"/>
        <end position="1136"/>
    </location>
</feature>
<feature type="compositionally biased region" description="Pro residues" evidence="3">
    <location>
        <begin position="161"/>
        <end position="177"/>
    </location>
</feature>
<feature type="compositionally biased region" description="Low complexity" evidence="3">
    <location>
        <begin position="216"/>
        <end position="251"/>
    </location>
</feature>
<feature type="compositionally biased region" description="Basic and acidic residues" evidence="3">
    <location>
        <begin position="533"/>
        <end position="545"/>
    </location>
</feature>
<feature type="compositionally biased region" description="Polar residues" evidence="3">
    <location>
        <begin position="663"/>
        <end position="677"/>
    </location>
</feature>
<feature type="compositionally biased region" description="Low complexity" evidence="3">
    <location>
        <begin position="692"/>
        <end position="737"/>
    </location>
</feature>
<feature type="compositionally biased region" description="Low complexity" evidence="3">
    <location>
        <begin position="775"/>
        <end position="786"/>
    </location>
</feature>
<feature type="compositionally biased region" description="Polar residues" evidence="3">
    <location>
        <begin position="787"/>
        <end position="810"/>
    </location>
</feature>
<feature type="compositionally biased region" description="Low complexity" evidence="3">
    <location>
        <begin position="928"/>
        <end position="953"/>
    </location>
</feature>
<feature type="compositionally biased region" description="Low complexity" evidence="3">
    <location>
        <begin position="962"/>
        <end position="987"/>
    </location>
</feature>
<feature type="compositionally biased region" description="Polar residues" evidence="3">
    <location>
        <begin position="988"/>
        <end position="1011"/>
    </location>
</feature>
<feature type="compositionally biased region" description="Low complexity" evidence="3">
    <location>
        <begin position="1024"/>
        <end position="1095"/>
    </location>
</feature>
<feature type="compositionally biased region" description="Polar residues" evidence="3">
    <location>
        <begin position="1096"/>
        <end position="1136"/>
    </location>
</feature>
<sequence>MPSLFHGVYQALYDYEARTEDELTFSENSLLYLLEKSSTDEWLKAKKAGPAGTNEIGLVPLTYIEPAPAKRQAYALYDYDKQTEEELTFKEGDALTVYDDSDSEWLLVCRGGDEYGFVPANYTGDAPPSAAPAPVAAIPTPVAAIPTPAGQPTTPITKDSPLPPLPKDAFPPPPQAYRPPASTTHASTEPVYANGRDEESPPPMPARPGGSGNGSGRPSSGAGDSRSRGSSVSRSRNASSANDKPSSSSANFFTWPVQEVDGRKKRKATLAIGNGMIMFSPERSSGQPQQWPVKDLVNYNSEKKHVFLDFKHPTVSFDLHLGSKDTADEVIYALGELAGAYNSSGLTEVMMAANSAGQKLGKVLYKFDAQGRDEVSVEEGENVFIIDDTKSRDWWMVKNSSGVAGVVPSSYIEIAPSEKTLKKVVDQQRKASGSSRDKSRDRSRDDRSRDRADKRSSRSSRDAPKSKPDPRKVRTWTDRSGAFKVDAALLGCVDGKIHLHKVNGVKIAVACSKMAIEDLEYVEDVTGVDLEEDKPLSRDRGGSSRDRRRSTSRSDRRKSSSGAASSANAPKPTPESDYDWFGFFLDCGVDVHACQRYATSFTRDQMDESILPEVTPSTLRSLGLKEGDILRVTKKLDEKYGRSGTGTSASTPVGGNPSGGLFSDTTGALKNNTSKTLTKADDTDPWSSLDKQQAPPQQQAPPVQQQPPVQQQPIQAQPTAPIQQQPIQAQPTAPIQPVRTGSINDLMNIKPLQPTPTSSNLQTQATGGIMQPIQQQYTQQPMSQSTSALPQQSMNTGILPQTTGPLQQSLTGSAPVQNPFLTGGPNTLLSQQTGGLVGVPTGGLVGVPTGGLQGVPTGYTAQNVLGMNQPANTGGYSMNAITNALAGASLNKQQQQQQPMVQQLTGGSMFGQQPMQQQLTGSSIFQQQPMQQQFTQQQPMQQQFTQQQPMSQQLTGGSIFNSQPQQPFQQQPMQPQQTSFQQQQPFSTGASASPFGSQPTTPFGQPQQSAGLSYFNNIQPLQQQQAFGQQMQPQQTFQPQQPFQQPFQQPFQQQQQQPFQQQQQQPFQQQQQPFGGLQSQPTGFGFGNSSSPFGGMQSQQTGAPSTSFGQQPLQPTATGRQRANLASATPNNPFGF</sequence>
<comment type="function">
    <text evidence="1">Component of the PAN1 actin cytoskeleton-regulatory complex required for the internalization of endosomes during actin-coupled endocytosis. The complex links the site of endocytosis to the cell membrane-associated actin cytoskeleton. Mediates uptake of external molecules and vacuolar degradation of plasma membrane proteins. Plays a role in the proper organization of the cell membrane-associated actin cytoskeleton and promotes its destabilization (By similarity).</text>
</comment>
<comment type="subunit">
    <text evidence="1">Component of the PAN1 actin cytoskeleton-regulatory complex.</text>
</comment>
<comment type="subcellular location">
    <subcellularLocation>
        <location evidence="1">Cell membrane</location>
        <topology evidence="1">Peripheral membrane protein</topology>
        <orientation evidence="1">Cytoplasmic side</orientation>
    </subcellularLocation>
    <subcellularLocation>
        <location evidence="1">Endosome membrane</location>
        <topology evidence="1">Peripheral membrane protein</topology>
        <orientation evidence="1">Cytoplasmic side</orientation>
    </subcellularLocation>
    <subcellularLocation>
        <location evidence="1">Cytoplasm</location>
        <location evidence="1">Cytoskeleton</location>
        <location evidence="1">Actin patch</location>
    </subcellularLocation>
    <text evidence="1">Cytoplasmic and cortical actin patches.</text>
</comment>
<comment type="similarity">
    <text evidence="4">Belongs to the SLA1 family.</text>
</comment>
<accession>Q6CHN0</accession>
<protein>
    <recommendedName>
        <fullName>Actin cytoskeleton-regulatory complex protein SLA1</fullName>
    </recommendedName>
</protein>
<dbReference type="EMBL" id="CR382127">
    <property type="protein sequence ID" value="CAG83757.1"/>
    <property type="molecule type" value="Genomic_DNA"/>
</dbReference>
<dbReference type="RefSeq" id="XP_499831.1">
    <property type="nucleotide sequence ID" value="XM_499831.1"/>
</dbReference>
<dbReference type="SMR" id="Q6CHN0"/>
<dbReference type="FunCoup" id="Q6CHN0">
    <property type="interactions" value="139"/>
</dbReference>
<dbReference type="STRING" id="284591.Q6CHN0"/>
<dbReference type="EnsemblFungi" id="CAG83757">
    <property type="protein sequence ID" value="CAG83757"/>
    <property type="gene ID" value="YALI0_A07018g"/>
</dbReference>
<dbReference type="KEGG" id="yli:2905766"/>
<dbReference type="VEuPathDB" id="FungiDB:YALI0_A07018g"/>
<dbReference type="HOGENOM" id="CLU_003674_0_0_1"/>
<dbReference type="InParanoid" id="Q6CHN0"/>
<dbReference type="OMA" id="FMAQGED"/>
<dbReference type="OrthoDB" id="123483at4891"/>
<dbReference type="Proteomes" id="UP000001300">
    <property type="component" value="Chromosome A"/>
</dbReference>
<dbReference type="GO" id="GO:0030479">
    <property type="term" value="C:actin cortical patch"/>
    <property type="evidence" value="ECO:0007669"/>
    <property type="project" value="UniProtKB-SubCell"/>
</dbReference>
<dbReference type="GO" id="GO:0010008">
    <property type="term" value="C:endosome membrane"/>
    <property type="evidence" value="ECO:0007669"/>
    <property type="project" value="UniProtKB-SubCell"/>
</dbReference>
<dbReference type="GO" id="GO:0005634">
    <property type="term" value="C:nucleus"/>
    <property type="evidence" value="ECO:0000318"/>
    <property type="project" value="GO_Central"/>
</dbReference>
<dbReference type="GO" id="GO:0005886">
    <property type="term" value="C:plasma membrane"/>
    <property type="evidence" value="ECO:0007669"/>
    <property type="project" value="UniProtKB-SubCell"/>
</dbReference>
<dbReference type="GO" id="GO:0003779">
    <property type="term" value="F:actin binding"/>
    <property type="evidence" value="ECO:0007669"/>
    <property type="project" value="UniProtKB-KW"/>
</dbReference>
<dbReference type="GO" id="GO:0042802">
    <property type="term" value="F:identical protein binding"/>
    <property type="evidence" value="ECO:0007669"/>
    <property type="project" value="InterPro"/>
</dbReference>
<dbReference type="GO" id="GO:0030674">
    <property type="term" value="F:protein-macromolecule adaptor activity"/>
    <property type="evidence" value="ECO:0007669"/>
    <property type="project" value="InterPro"/>
</dbReference>
<dbReference type="GO" id="GO:0043130">
    <property type="term" value="F:ubiquitin binding"/>
    <property type="evidence" value="ECO:0007669"/>
    <property type="project" value="InterPro"/>
</dbReference>
<dbReference type="GO" id="GO:0000147">
    <property type="term" value="P:actin cortical patch assembly"/>
    <property type="evidence" value="ECO:0000318"/>
    <property type="project" value="GO_Central"/>
</dbReference>
<dbReference type="GO" id="GO:0006897">
    <property type="term" value="P:endocytosis"/>
    <property type="evidence" value="ECO:0007669"/>
    <property type="project" value="UniProtKB-KW"/>
</dbReference>
<dbReference type="GO" id="GO:0030833">
    <property type="term" value="P:regulation of actin filament polymerization"/>
    <property type="evidence" value="ECO:0000318"/>
    <property type="project" value="GO_Central"/>
</dbReference>
<dbReference type="CDD" id="cd09532">
    <property type="entry name" value="SAM_SLA1_fungal"/>
    <property type="match status" value="1"/>
</dbReference>
<dbReference type="CDD" id="cd11773">
    <property type="entry name" value="SH3_Sla1p_1"/>
    <property type="match status" value="1"/>
</dbReference>
<dbReference type="CDD" id="cd11774">
    <property type="entry name" value="SH3_Sla1p_2"/>
    <property type="match status" value="1"/>
</dbReference>
<dbReference type="CDD" id="cd11775">
    <property type="entry name" value="SH3_Sla1p_3"/>
    <property type="match status" value="1"/>
</dbReference>
<dbReference type="Gene3D" id="2.30.30.40">
    <property type="entry name" value="SH3 Domains"/>
    <property type="match status" value="3"/>
</dbReference>
<dbReference type="Gene3D" id="2.30.30.700">
    <property type="entry name" value="SLA1 homology domain 1"/>
    <property type="match status" value="1"/>
</dbReference>
<dbReference type="Gene3D" id="1.10.150.50">
    <property type="entry name" value="Transcription Factor, Ets-1"/>
    <property type="match status" value="1"/>
</dbReference>
<dbReference type="InterPro" id="IPR056996">
    <property type="entry name" value="PH_SLA1"/>
</dbReference>
<dbReference type="InterPro" id="IPR013761">
    <property type="entry name" value="SAM/pointed_sf"/>
</dbReference>
<dbReference type="InterPro" id="IPR036028">
    <property type="entry name" value="SH3-like_dom_sf"/>
</dbReference>
<dbReference type="InterPro" id="IPR001452">
    <property type="entry name" value="SH3_domain"/>
</dbReference>
<dbReference type="InterPro" id="IPR007131">
    <property type="entry name" value="SHD1"/>
</dbReference>
<dbReference type="InterPro" id="IPR035800">
    <property type="entry name" value="Sla1_SH3_1"/>
</dbReference>
<dbReference type="InterPro" id="IPR035821">
    <property type="entry name" value="Sla1_SH3_3"/>
</dbReference>
<dbReference type="PANTHER" id="PTHR15735:SF19">
    <property type="entry name" value="ACTIN CYTOSKELETON-REGULATORY COMPLEX PROTEIN SLA1"/>
    <property type="match status" value="1"/>
</dbReference>
<dbReference type="PANTHER" id="PTHR15735">
    <property type="entry name" value="FCH AND DOUBLE SH3 DOMAINS PROTEIN"/>
    <property type="match status" value="1"/>
</dbReference>
<dbReference type="Pfam" id="PF24081">
    <property type="entry name" value="PH_SLA1"/>
    <property type="match status" value="1"/>
</dbReference>
<dbReference type="Pfam" id="PF00018">
    <property type="entry name" value="SH3_1"/>
    <property type="match status" value="3"/>
</dbReference>
<dbReference type="Pfam" id="PF03983">
    <property type="entry name" value="SHD1"/>
    <property type="match status" value="1"/>
</dbReference>
<dbReference type="PRINTS" id="PR00452">
    <property type="entry name" value="SH3DOMAIN"/>
</dbReference>
<dbReference type="SMART" id="SM00326">
    <property type="entry name" value="SH3"/>
    <property type="match status" value="3"/>
</dbReference>
<dbReference type="SUPFAM" id="SSF50044">
    <property type="entry name" value="SH3-domain"/>
    <property type="match status" value="3"/>
</dbReference>
<dbReference type="PROSITE" id="PS50002">
    <property type="entry name" value="SH3"/>
    <property type="match status" value="3"/>
</dbReference>
<proteinExistence type="inferred from homology"/>